<keyword id="KW-0067">ATP-binding</keyword>
<keyword id="KW-0963">Cytoplasm</keyword>
<keyword id="KW-0329">Glyoxylate bypass</keyword>
<keyword id="KW-0378">Hydrolase</keyword>
<keyword id="KW-0418">Kinase</keyword>
<keyword id="KW-0547">Nucleotide-binding</keyword>
<keyword id="KW-0904">Protein phosphatase</keyword>
<keyword id="KW-1185">Reference proteome</keyword>
<keyword id="KW-0723">Serine/threonine-protein kinase</keyword>
<keyword id="KW-0808">Transferase</keyword>
<keyword id="KW-0816">Tricarboxylic acid cycle</keyword>
<name>ACEK_PSEAE</name>
<feature type="chain" id="PRO_0000057903" description="Isocitrate dehydrogenase kinase/phosphatase">
    <location>
        <begin position="1"/>
        <end position="577"/>
    </location>
</feature>
<feature type="active site" evidence="1">
    <location>
        <position position="374"/>
    </location>
</feature>
<feature type="binding site" evidence="1">
    <location>
        <begin position="318"/>
        <end position="324"/>
    </location>
    <ligand>
        <name>ATP</name>
        <dbReference type="ChEBI" id="CHEBI:30616"/>
    </ligand>
</feature>
<feature type="binding site" evidence="1">
    <location>
        <position position="339"/>
    </location>
    <ligand>
        <name>ATP</name>
        <dbReference type="ChEBI" id="CHEBI:30616"/>
    </ligand>
</feature>
<reference key="1">
    <citation type="journal article" date="2000" name="Nature">
        <title>Complete genome sequence of Pseudomonas aeruginosa PAO1, an opportunistic pathogen.</title>
        <authorList>
            <person name="Stover C.K."/>
            <person name="Pham X.-Q.T."/>
            <person name="Erwin A.L."/>
            <person name="Mizoguchi S.D."/>
            <person name="Warrener P."/>
            <person name="Hickey M.J."/>
            <person name="Brinkman F.S.L."/>
            <person name="Hufnagle W.O."/>
            <person name="Kowalik D.J."/>
            <person name="Lagrou M."/>
            <person name="Garber R.L."/>
            <person name="Goltry L."/>
            <person name="Tolentino E."/>
            <person name="Westbrock-Wadman S."/>
            <person name="Yuan Y."/>
            <person name="Brody L.L."/>
            <person name="Coulter S.N."/>
            <person name="Folger K.R."/>
            <person name="Kas A."/>
            <person name="Larbig K."/>
            <person name="Lim R.M."/>
            <person name="Smith K.A."/>
            <person name="Spencer D.H."/>
            <person name="Wong G.K.-S."/>
            <person name="Wu Z."/>
            <person name="Paulsen I.T."/>
            <person name="Reizer J."/>
            <person name="Saier M.H. Jr."/>
            <person name="Hancock R.E.W."/>
            <person name="Lory S."/>
            <person name="Olson M.V."/>
        </authorList>
    </citation>
    <scope>NUCLEOTIDE SEQUENCE [LARGE SCALE GENOMIC DNA]</scope>
    <source>
        <strain>ATCC 15692 / DSM 22644 / CIP 104116 / JCM 14847 / LMG 12228 / 1C / PRS 101 / PAO1</strain>
    </source>
</reference>
<evidence type="ECO:0000255" key="1">
    <source>
        <dbReference type="HAMAP-Rule" id="MF_00747"/>
    </source>
</evidence>
<organism>
    <name type="scientific">Pseudomonas aeruginosa (strain ATCC 15692 / DSM 22644 / CIP 104116 / JCM 14847 / LMG 12228 / 1C / PRS 101 / PAO1)</name>
    <dbReference type="NCBI Taxonomy" id="208964"/>
    <lineage>
        <taxon>Bacteria</taxon>
        <taxon>Pseudomonadati</taxon>
        <taxon>Pseudomonadota</taxon>
        <taxon>Gammaproteobacteria</taxon>
        <taxon>Pseudomonadales</taxon>
        <taxon>Pseudomonadaceae</taxon>
        <taxon>Pseudomonas</taxon>
    </lineage>
</organism>
<comment type="function">
    <text evidence="1">Bifunctional enzyme which can phosphorylate or dephosphorylate isocitrate dehydrogenase (IDH) on a specific serine residue. This is a regulatory mechanism which enables bacteria to bypass the Krebs cycle via the glyoxylate shunt in response to the source of carbon. When bacteria are grown on glucose, IDH is fully active and unphosphorylated, but when grown on acetate or ethanol, the activity of IDH declines drastically concomitant with its phosphorylation.</text>
</comment>
<comment type="catalytic activity">
    <reaction evidence="1">
        <text>L-seryl-[isocitrate dehydrogenase] + ATP = O-phospho-L-seryl-[isocitrate dehydrogenase] + ADP + H(+)</text>
        <dbReference type="Rhea" id="RHEA:43540"/>
        <dbReference type="Rhea" id="RHEA-COMP:10605"/>
        <dbReference type="Rhea" id="RHEA-COMP:10606"/>
        <dbReference type="ChEBI" id="CHEBI:15378"/>
        <dbReference type="ChEBI" id="CHEBI:29999"/>
        <dbReference type="ChEBI" id="CHEBI:30616"/>
        <dbReference type="ChEBI" id="CHEBI:83421"/>
        <dbReference type="ChEBI" id="CHEBI:456216"/>
        <dbReference type="EC" id="2.7.11.5"/>
    </reaction>
</comment>
<comment type="subcellular location">
    <subcellularLocation>
        <location evidence="1">Cytoplasm</location>
    </subcellularLocation>
</comment>
<comment type="similarity">
    <text evidence="1">Belongs to the AceK family.</text>
</comment>
<accession>Q9I3W8</accession>
<protein>
    <recommendedName>
        <fullName evidence="1">Isocitrate dehydrogenase kinase/phosphatase</fullName>
        <shortName evidence="1">IDH kinase/phosphatase</shortName>
        <shortName evidence="1">IDHK/P</shortName>
        <ecNumber evidence="1">2.7.11.5</ecNumber>
        <ecNumber evidence="1">3.1.3.-</ecNumber>
    </recommendedName>
</protein>
<gene>
    <name evidence="1" type="primary">aceK</name>
    <name type="ordered locus">PA1376</name>
</gene>
<dbReference type="EC" id="2.7.11.5" evidence="1"/>
<dbReference type="EC" id="3.1.3.-" evidence="1"/>
<dbReference type="EMBL" id="AE004091">
    <property type="protein sequence ID" value="AAG04765.1"/>
    <property type="molecule type" value="Genomic_DNA"/>
</dbReference>
<dbReference type="PIR" id="D83473">
    <property type="entry name" value="D83473"/>
</dbReference>
<dbReference type="RefSeq" id="NP_250067.1">
    <property type="nucleotide sequence ID" value="NC_002516.2"/>
</dbReference>
<dbReference type="RefSeq" id="WP_003112397.1">
    <property type="nucleotide sequence ID" value="NZ_QZGE01000005.1"/>
</dbReference>
<dbReference type="SMR" id="Q9I3W8"/>
<dbReference type="FunCoup" id="Q9I3W8">
    <property type="interactions" value="35"/>
</dbReference>
<dbReference type="STRING" id="208964.PA1376"/>
<dbReference type="PaxDb" id="208964-PA1376"/>
<dbReference type="GeneID" id="881156"/>
<dbReference type="KEGG" id="pae:PA1376"/>
<dbReference type="PATRIC" id="fig|208964.12.peg.1428"/>
<dbReference type="PseudoCAP" id="PA1376"/>
<dbReference type="HOGENOM" id="CLU_033804_1_1_6"/>
<dbReference type="InParanoid" id="Q9I3W8"/>
<dbReference type="OrthoDB" id="5287793at2"/>
<dbReference type="PhylomeDB" id="Q9I3W8"/>
<dbReference type="BioCyc" id="PAER208964:G1FZ6-1402-MONOMER"/>
<dbReference type="Proteomes" id="UP000002438">
    <property type="component" value="Chromosome"/>
</dbReference>
<dbReference type="GO" id="GO:0005737">
    <property type="term" value="C:cytoplasm"/>
    <property type="evidence" value="ECO:0007669"/>
    <property type="project" value="UniProtKB-SubCell"/>
</dbReference>
<dbReference type="GO" id="GO:0008772">
    <property type="term" value="F:[isocitrate dehydrogenase (NADP+)] kinase activity"/>
    <property type="evidence" value="ECO:0000318"/>
    <property type="project" value="GO_Central"/>
</dbReference>
<dbReference type="GO" id="GO:0016208">
    <property type="term" value="F:AMP binding"/>
    <property type="evidence" value="ECO:0000318"/>
    <property type="project" value="GO_Central"/>
</dbReference>
<dbReference type="GO" id="GO:0005524">
    <property type="term" value="F:ATP binding"/>
    <property type="evidence" value="ECO:0000318"/>
    <property type="project" value="GO_Central"/>
</dbReference>
<dbReference type="GO" id="GO:0004721">
    <property type="term" value="F:phosphoprotein phosphatase activity"/>
    <property type="evidence" value="ECO:0000318"/>
    <property type="project" value="GO_Central"/>
</dbReference>
<dbReference type="GO" id="GO:0004674">
    <property type="term" value="F:protein serine/threonine kinase activity"/>
    <property type="evidence" value="ECO:0007669"/>
    <property type="project" value="UniProtKB-KW"/>
</dbReference>
<dbReference type="GO" id="GO:0006006">
    <property type="term" value="P:glucose metabolic process"/>
    <property type="evidence" value="ECO:0007669"/>
    <property type="project" value="InterPro"/>
</dbReference>
<dbReference type="GO" id="GO:0006097">
    <property type="term" value="P:glyoxylate cycle"/>
    <property type="evidence" value="ECO:0007669"/>
    <property type="project" value="UniProtKB-UniRule"/>
</dbReference>
<dbReference type="GO" id="GO:0006099">
    <property type="term" value="P:tricarboxylic acid cycle"/>
    <property type="evidence" value="ECO:0007669"/>
    <property type="project" value="UniProtKB-UniRule"/>
</dbReference>
<dbReference type="HAMAP" id="MF_00747">
    <property type="entry name" value="AceK"/>
    <property type="match status" value="1"/>
</dbReference>
<dbReference type="InterPro" id="IPR046855">
    <property type="entry name" value="AceK_kinase"/>
</dbReference>
<dbReference type="InterPro" id="IPR046854">
    <property type="entry name" value="AceK_regulatory"/>
</dbReference>
<dbReference type="InterPro" id="IPR010452">
    <property type="entry name" value="Isocitrate_DH_AceK"/>
</dbReference>
<dbReference type="NCBIfam" id="NF002804">
    <property type="entry name" value="PRK02946.1"/>
    <property type="match status" value="1"/>
</dbReference>
<dbReference type="PANTHER" id="PTHR39559">
    <property type="match status" value="1"/>
</dbReference>
<dbReference type="PANTHER" id="PTHR39559:SF1">
    <property type="entry name" value="ISOCITRATE DEHYDROGENASE KINASE_PHOSPHATASE"/>
    <property type="match status" value="1"/>
</dbReference>
<dbReference type="Pfam" id="PF06315">
    <property type="entry name" value="AceK_kinase"/>
    <property type="match status" value="1"/>
</dbReference>
<dbReference type="Pfam" id="PF20423">
    <property type="entry name" value="AceK_regulatory"/>
    <property type="match status" value="1"/>
</dbReference>
<dbReference type="PIRSF" id="PIRSF000719">
    <property type="entry name" value="AceK"/>
    <property type="match status" value="1"/>
</dbReference>
<sequence length="577" mass="66761">MVQSAPASEIAALILRGFDDYREQFREITDGARARFEQAQWQEAQRASAQRINLYEEKVAETVAGLRAGLADSELLDVERWPIIKSAYIAQIDLRLDDELAETWFNSIFCGLFSHDNISDGTMFVHTTRPSLRAHARAPYTRTYRPGGDLRQALEKIFDDYRFDVPYDDRERDLERIDALLHSNLPDWVCKDPDLAIELIGSVFYRNKGAYLVGRLFTPDEQWPLVFPLLHREDHGIQFDTVITDEAEVSIIFSFTRSYFMVDVPVPAELVAFLKRLLPGKHLAELYTSIGFYKQGKSEFYRALINHLATTDDRFVMAPGVRGMVMSVFTLPGFNTVFKIIKDRFNPSKSVDHATVIQKYQLVKNHDRVGRLADTQQFADFRFPVSKFEPECLAELLEVAPSTVVMEGDVVLIRHCWTERRMTPLNIYLENASEAQTREALNDYGLAIKQLAAANIFPGDMLLKNFGVTRHGRVVFYDYDEICYLTEVNFRYIPEPRFPEDEMSSEPWYSVGPNDVFPEEFPRFLFVDLNQRRLFAKLHGNLYDAKYWQGLQEQIREGKVIDVFPYRRQETPEQLLG</sequence>
<proteinExistence type="inferred from homology"/>